<dbReference type="EC" id="2.7.7.4"/>
<dbReference type="EMBL" id="AJ000974">
    <property type="protein sequence ID" value="CAA04411.1"/>
    <property type="molecule type" value="Genomic_DNA"/>
</dbReference>
<dbReference type="EMBL" id="AL009126">
    <property type="protein sequence ID" value="CAB13433.1"/>
    <property type="molecule type" value="Genomic_DNA"/>
</dbReference>
<dbReference type="PIR" id="B69877">
    <property type="entry name" value="B69877"/>
</dbReference>
<dbReference type="RefSeq" id="NP_389442.1">
    <property type="nucleotide sequence ID" value="NC_000964.3"/>
</dbReference>
<dbReference type="RefSeq" id="WP_003245745.1">
    <property type="nucleotide sequence ID" value="NZ_OZ025638.1"/>
</dbReference>
<dbReference type="SMR" id="O34764"/>
<dbReference type="FunCoup" id="O34764">
    <property type="interactions" value="440"/>
</dbReference>
<dbReference type="IntAct" id="O34764">
    <property type="interactions" value="2"/>
</dbReference>
<dbReference type="MINT" id="O34764"/>
<dbReference type="STRING" id="224308.BSU15590"/>
<dbReference type="PaxDb" id="224308-BSU15590"/>
<dbReference type="EnsemblBacteria" id="CAB13433">
    <property type="protein sequence ID" value="CAB13433"/>
    <property type="gene ID" value="BSU_15590"/>
</dbReference>
<dbReference type="GeneID" id="936726"/>
<dbReference type="KEGG" id="bsu:BSU15590"/>
<dbReference type="PATRIC" id="fig|224308.179.peg.1699"/>
<dbReference type="eggNOG" id="COG2046">
    <property type="taxonomic scope" value="Bacteria"/>
</dbReference>
<dbReference type="InParanoid" id="O34764"/>
<dbReference type="OrthoDB" id="9804504at2"/>
<dbReference type="PhylomeDB" id="O34764"/>
<dbReference type="BioCyc" id="BSUB:BSU15590-MONOMER"/>
<dbReference type="UniPathway" id="UPA00140">
    <property type="reaction ID" value="UER00204"/>
</dbReference>
<dbReference type="Proteomes" id="UP000001570">
    <property type="component" value="Chromosome"/>
</dbReference>
<dbReference type="GO" id="GO:0005524">
    <property type="term" value="F:ATP binding"/>
    <property type="evidence" value="ECO:0007669"/>
    <property type="project" value="UniProtKB-KW"/>
</dbReference>
<dbReference type="GO" id="GO:0004781">
    <property type="term" value="F:sulfate adenylyltransferase (ATP) activity"/>
    <property type="evidence" value="ECO:0007669"/>
    <property type="project" value="UniProtKB-UniRule"/>
</dbReference>
<dbReference type="GO" id="GO:0070814">
    <property type="term" value="P:hydrogen sulfide biosynthetic process"/>
    <property type="evidence" value="ECO:0007669"/>
    <property type="project" value="UniProtKB-UniRule"/>
</dbReference>
<dbReference type="GO" id="GO:0000103">
    <property type="term" value="P:sulfate assimilation"/>
    <property type="evidence" value="ECO:0007669"/>
    <property type="project" value="UniProtKB-UniRule"/>
</dbReference>
<dbReference type="CDD" id="cd00517">
    <property type="entry name" value="ATPS"/>
    <property type="match status" value="1"/>
</dbReference>
<dbReference type="Gene3D" id="3.40.50.620">
    <property type="entry name" value="HUPs"/>
    <property type="match status" value="1"/>
</dbReference>
<dbReference type="Gene3D" id="3.10.400.10">
    <property type="entry name" value="Sulfate adenylyltransferase"/>
    <property type="match status" value="1"/>
</dbReference>
<dbReference type="HAMAP" id="MF_00066">
    <property type="entry name" value="Sulf_adenylyltr"/>
    <property type="match status" value="1"/>
</dbReference>
<dbReference type="InterPro" id="IPR025980">
    <property type="entry name" value="ATP-Sase_PUA-like_dom"/>
</dbReference>
<dbReference type="InterPro" id="IPR015947">
    <property type="entry name" value="PUA-like_sf"/>
</dbReference>
<dbReference type="InterPro" id="IPR014729">
    <property type="entry name" value="Rossmann-like_a/b/a_fold"/>
</dbReference>
<dbReference type="InterPro" id="IPR020792">
    <property type="entry name" value="SO4_adenylyltransferase_pro"/>
</dbReference>
<dbReference type="InterPro" id="IPR024951">
    <property type="entry name" value="Sulfurylase_cat_dom"/>
</dbReference>
<dbReference type="InterPro" id="IPR002650">
    <property type="entry name" value="Sulphate_adenylyltransferase"/>
</dbReference>
<dbReference type="NCBIfam" id="NF003166">
    <property type="entry name" value="PRK04149.1"/>
    <property type="match status" value="1"/>
</dbReference>
<dbReference type="NCBIfam" id="TIGR00339">
    <property type="entry name" value="sopT"/>
    <property type="match status" value="1"/>
</dbReference>
<dbReference type="PANTHER" id="PTHR43509">
    <property type="match status" value="1"/>
</dbReference>
<dbReference type="PANTHER" id="PTHR43509:SF1">
    <property type="entry name" value="SULFATE ADENYLYLTRANSFERASE"/>
    <property type="match status" value="1"/>
</dbReference>
<dbReference type="Pfam" id="PF01747">
    <property type="entry name" value="ATP-sulfurylase"/>
    <property type="match status" value="1"/>
</dbReference>
<dbReference type="Pfam" id="PF14306">
    <property type="entry name" value="PUA_2"/>
    <property type="match status" value="1"/>
</dbReference>
<dbReference type="SUPFAM" id="SSF52374">
    <property type="entry name" value="Nucleotidylyl transferase"/>
    <property type="match status" value="1"/>
</dbReference>
<dbReference type="SUPFAM" id="SSF88697">
    <property type="entry name" value="PUA domain-like"/>
    <property type="match status" value="1"/>
</dbReference>
<organism>
    <name type="scientific">Bacillus subtilis (strain 168)</name>
    <dbReference type="NCBI Taxonomy" id="224308"/>
    <lineage>
        <taxon>Bacteria</taxon>
        <taxon>Bacillati</taxon>
        <taxon>Bacillota</taxon>
        <taxon>Bacilli</taxon>
        <taxon>Bacillales</taxon>
        <taxon>Bacillaceae</taxon>
        <taxon>Bacillus</taxon>
    </lineage>
</organism>
<keyword id="KW-0067">ATP-binding</keyword>
<keyword id="KW-0547">Nucleotide-binding</keyword>
<keyword id="KW-0548">Nucleotidyltransferase</keyword>
<keyword id="KW-1185">Reference proteome</keyword>
<keyword id="KW-0808">Transferase</keyword>
<accession>O34764</accession>
<protein>
    <recommendedName>
        <fullName>Sulfate adenylyltransferase</fullName>
        <ecNumber>2.7.7.4</ecNumber>
    </recommendedName>
    <alternativeName>
        <fullName>ATP-sulfurylase</fullName>
    </alternativeName>
    <alternativeName>
        <fullName>Sulfate adenylate transferase</fullName>
        <shortName>SAT</shortName>
    </alternativeName>
</protein>
<sequence length="382" mass="42884">MSLAPHGGTLVNRVDESYDVSGIQKEIELDLISFADLELIGIGAYSPIEGFFNEKDYVSVVENMRLSSGVVWSLPITLPVDAQKAAELSLGETVKLTYEGETYGVIQIEDLYVPDKQKEAVNVYKTDEQEHPGVKKLFSRGNTYVGGPITLIKKASKQFPEFTFEPSETRRQFAEKGWETIVGFQTRNPVHRAHEYIQKTALETVDGLFLNPLVGETKSDDIPADVRMESYQVLLDHYYPKDRVFLGVFLAAMRYAGPREAIFHALVRKNYGCTHFIVGRDHAGVGDYYGTYEAQELFDTFKPEELGITPLKFEHSFFCKKCGNMGTAKTCPHGREHHVILSGTKVRGMLRDGVLPPAEFSRKEVVEVLIKGMKKKEEVGVS</sequence>
<proteinExistence type="evidence at transcript level"/>
<gene>
    <name type="primary">sat</name>
    <name type="synonym">ylnB</name>
    <name type="ordered locus">BSU15590</name>
</gene>
<evidence type="ECO:0000269" key="1">
    <source>
    </source>
</evidence>
<evidence type="ECO:0000305" key="2"/>
<comment type="catalytic activity">
    <reaction>
        <text>sulfate + ATP + H(+) = adenosine 5'-phosphosulfate + diphosphate</text>
        <dbReference type="Rhea" id="RHEA:18133"/>
        <dbReference type="ChEBI" id="CHEBI:15378"/>
        <dbReference type="ChEBI" id="CHEBI:16189"/>
        <dbReference type="ChEBI" id="CHEBI:30616"/>
        <dbReference type="ChEBI" id="CHEBI:33019"/>
        <dbReference type="ChEBI" id="CHEBI:58243"/>
        <dbReference type="EC" id="2.7.7.4"/>
    </reaction>
</comment>
<comment type="pathway">
    <text>Sulfur metabolism; hydrogen sulfide biosynthesis; sulfite from sulfate: step 1/3.</text>
</comment>
<comment type="induction">
    <text evidence="1">Up-regulated by sulfur starvation and repressed by cysteine. Also induced by O-acetyl-L-serine (OAS), a direct precursor of cysteine, maybe via inactivation of a putative transcriptional repressor of the cysH operon whose activity is controlled by the intracellular levels of OAS.</text>
</comment>
<comment type="similarity">
    <text evidence="2">Belongs to the sulfate adenylyltransferase family.</text>
</comment>
<feature type="chain" id="PRO_0000105937" description="Sulfate adenylyltransferase">
    <location>
        <begin position="1"/>
        <end position="382"/>
    </location>
</feature>
<reference key="1">
    <citation type="submission" date="1997-10" db="EMBL/GenBank/DDBJ databases">
        <title>Cloning and sequencing 8 Kbp of DNA from Bacillus subtilis downstream of the pyr operon.</title>
        <authorList>
            <person name="Foulger D."/>
            <person name="Errington J."/>
        </authorList>
    </citation>
    <scope>NUCLEOTIDE SEQUENCE [GENOMIC DNA]</scope>
    <source>
        <strain>168</strain>
    </source>
</reference>
<reference key="2">
    <citation type="journal article" date="1997" name="Nature">
        <title>The complete genome sequence of the Gram-positive bacterium Bacillus subtilis.</title>
        <authorList>
            <person name="Kunst F."/>
            <person name="Ogasawara N."/>
            <person name="Moszer I."/>
            <person name="Albertini A.M."/>
            <person name="Alloni G."/>
            <person name="Azevedo V."/>
            <person name="Bertero M.G."/>
            <person name="Bessieres P."/>
            <person name="Bolotin A."/>
            <person name="Borchert S."/>
            <person name="Borriss R."/>
            <person name="Boursier L."/>
            <person name="Brans A."/>
            <person name="Braun M."/>
            <person name="Brignell S.C."/>
            <person name="Bron S."/>
            <person name="Brouillet S."/>
            <person name="Bruschi C.V."/>
            <person name="Caldwell B."/>
            <person name="Capuano V."/>
            <person name="Carter N.M."/>
            <person name="Choi S.-K."/>
            <person name="Codani J.-J."/>
            <person name="Connerton I.F."/>
            <person name="Cummings N.J."/>
            <person name="Daniel R.A."/>
            <person name="Denizot F."/>
            <person name="Devine K.M."/>
            <person name="Duesterhoeft A."/>
            <person name="Ehrlich S.D."/>
            <person name="Emmerson P.T."/>
            <person name="Entian K.-D."/>
            <person name="Errington J."/>
            <person name="Fabret C."/>
            <person name="Ferrari E."/>
            <person name="Foulger D."/>
            <person name="Fritz C."/>
            <person name="Fujita M."/>
            <person name="Fujita Y."/>
            <person name="Fuma S."/>
            <person name="Galizzi A."/>
            <person name="Galleron N."/>
            <person name="Ghim S.-Y."/>
            <person name="Glaser P."/>
            <person name="Goffeau A."/>
            <person name="Golightly E.J."/>
            <person name="Grandi G."/>
            <person name="Guiseppi G."/>
            <person name="Guy B.J."/>
            <person name="Haga K."/>
            <person name="Haiech J."/>
            <person name="Harwood C.R."/>
            <person name="Henaut A."/>
            <person name="Hilbert H."/>
            <person name="Holsappel S."/>
            <person name="Hosono S."/>
            <person name="Hullo M.-F."/>
            <person name="Itaya M."/>
            <person name="Jones L.-M."/>
            <person name="Joris B."/>
            <person name="Karamata D."/>
            <person name="Kasahara Y."/>
            <person name="Klaerr-Blanchard M."/>
            <person name="Klein C."/>
            <person name="Kobayashi Y."/>
            <person name="Koetter P."/>
            <person name="Koningstein G."/>
            <person name="Krogh S."/>
            <person name="Kumano M."/>
            <person name="Kurita K."/>
            <person name="Lapidus A."/>
            <person name="Lardinois S."/>
            <person name="Lauber J."/>
            <person name="Lazarevic V."/>
            <person name="Lee S.-M."/>
            <person name="Levine A."/>
            <person name="Liu H."/>
            <person name="Masuda S."/>
            <person name="Mauel C."/>
            <person name="Medigue C."/>
            <person name="Medina N."/>
            <person name="Mellado R.P."/>
            <person name="Mizuno M."/>
            <person name="Moestl D."/>
            <person name="Nakai S."/>
            <person name="Noback M."/>
            <person name="Noone D."/>
            <person name="O'Reilly M."/>
            <person name="Ogawa K."/>
            <person name="Ogiwara A."/>
            <person name="Oudega B."/>
            <person name="Park S.-H."/>
            <person name="Parro V."/>
            <person name="Pohl T.M."/>
            <person name="Portetelle D."/>
            <person name="Porwollik S."/>
            <person name="Prescott A.M."/>
            <person name="Presecan E."/>
            <person name="Pujic P."/>
            <person name="Purnelle B."/>
            <person name="Rapoport G."/>
            <person name="Rey M."/>
            <person name="Reynolds S."/>
            <person name="Rieger M."/>
            <person name="Rivolta C."/>
            <person name="Rocha E."/>
            <person name="Roche B."/>
            <person name="Rose M."/>
            <person name="Sadaie Y."/>
            <person name="Sato T."/>
            <person name="Scanlan E."/>
            <person name="Schleich S."/>
            <person name="Schroeter R."/>
            <person name="Scoffone F."/>
            <person name="Sekiguchi J."/>
            <person name="Sekowska A."/>
            <person name="Seror S.J."/>
            <person name="Serror P."/>
            <person name="Shin B.-S."/>
            <person name="Soldo B."/>
            <person name="Sorokin A."/>
            <person name="Tacconi E."/>
            <person name="Takagi T."/>
            <person name="Takahashi H."/>
            <person name="Takemaru K."/>
            <person name="Takeuchi M."/>
            <person name="Tamakoshi A."/>
            <person name="Tanaka T."/>
            <person name="Terpstra P."/>
            <person name="Tognoni A."/>
            <person name="Tosato V."/>
            <person name="Uchiyama S."/>
            <person name="Vandenbol M."/>
            <person name="Vannier F."/>
            <person name="Vassarotti A."/>
            <person name="Viari A."/>
            <person name="Wambutt R."/>
            <person name="Wedler E."/>
            <person name="Wedler H."/>
            <person name="Weitzenegger T."/>
            <person name="Winters P."/>
            <person name="Wipat A."/>
            <person name="Yamamoto H."/>
            <person name="Yamane K."/>
            <person name="Yasumoto K."/>
            <person name="Yata K."/>
            <person name="Yoshida K."/>
            <person name="Yoshikawa H.-F."/>
            <person name="Zumstein E."/>
            <person name="Yoshikawa H."/>
            <person name="Danchin A."/>
        </authorList>
    </citation>
    <scope>NUCLEOTIDE SEQUENCE [LARGE SCALE GENOMIC DNA]</scope>
    <source>
        <strain>168</strain>
    </source>
</reference>
<reference key="3">
    <citation type="journal article" date="2000" name="J. Bacteriol.">
        <title>Transcriptional control of the sulfur-regulated cysH operon, containing genes involved in L-cysteine biosynthesis in Bacillus subtilis.</title>
        <authorList>
            <person name="Mansilla M.C."/>
            <person name="Albanesi D."/>
            <person name="de Mendoza D."/>
        </authorList>
    </citation>
    <scope>INDUCTION</scope>
    <source>
        <strain>168 / JH642</strain>
    </source>
</reference>
<name>SAT1_BACSU</name>